<reference key="1">
    <citation type="journal article" date="2003" name="Science">
        <title>A genomic view of the human-Bacteroides thetaiotaomicron symbiosis.</title>
        <authorList>
            <person name="Xu J."/>
            <person name="Bjursell M.K."/>
            <person name="Himrod J."/>
            <person name="Deng S."/>
            <person name="Carmichael L.K."/>
            <person name="Chiang H.C."/>
            <person name="Hooper L.V."/>
            <person name="Gordon J.I."/>
        </authorList>
    </citation>
    <scope>NUCLEOTIDE SEQUENCE [LARGE SCALE GENOMIC DNA]</scope>
    <source>
        <strain>ATCC 29148 / DSM 2079 / JCM 5827 / CCUG 10774 / NCTC 10582 / VPI-5482 / E50</strain>
    </source>
</reference>
<organism>
    <name type="scientific">Bacteroides thetaiotaomicron (strain ATCC 29148 / DSM 2079 / JCM 5827 / CCUG 10774 / NCTC 10582 / VPI-5482 / E50)</name>
    <dbReference type="NCBI Taxonomy" id="226186"/>
    <lineage>
        <taxon>Bacteria</taxon>
        <taxon>Pseudomonadati</taxon>
        <taxon>Bacteroidota</taxon>
        <taxon>Bacteroidia</taxon>
        <taxon>Bacteroidales</taxon>
        <taxon>Bacteroidaceae</taxon>
        <taxon>Bacteroides</taxon>
    </lineage>
</organism>
<accession>Q8A6A7</accession>
<protein>
    <recommendedName>
        <fullName evidence="1">Holliday junction branch migration complex subunit RuvA</fullName>
    </recommendedName>
</protein>
<evidence type="ECO:0000255" key="1">
    <source>
        <dbReference type="HAMAP-Rule" id="MF_00031"/>
    </source>
</evidence>
<sequence length="201" mass="21317">MIEYVRGELAELSPATAVIDCNGVGYAANISLNTYSAIQGKKNCKLYIYEAIREDAYVLYGFADKQEREIFLLLISVSGIGGNTARMILSALSPAELVNVISTENANLLKTVKGIGLKTAQRVIVDLKDKIKTMGATVAGGSASAGMLLQSASVEVQEEAVAALTMLGFAAAPSQKVVLAILKEEPDAPVEKVIKLALKRL</sequence>
<keyword id="KW-0963">Cytoplasm</keyword>
<keyword id="KW-0227">DNA damage</keyword>
<keyword id="KW-0233">DNA recombination</keyword>
<keyword id="KW-0234">DNA repair</keyword>
<keyword id="KW-0238">DNA-binding</keyword>
<keyword id="KW-1185">Reference proteome</keyword>
<dbReference type="EMBL" id="AE015928">
    <property type="protein sequence ID" value="AAO77085.1"/>
    <property type="molecule type" value="Genomic_DNA"/>
</dbReference>
<dbReference type="RefSeq" id="NP_810891.1">
    <property type="nucleotide sequence ID" value="NC_004663.1"/>
</dbReference>
<dbReference type="RefSeq" id="WP_008766351.1">
    <property type="nucleotide sequence ID" value="NZ_UYXG01000021.1"/>
</dbReference>
<dbReference type="SMR" id="Q8A6A7"/>
<dbReference type="FunCoup" id="Q8A6A7">
    <property type="interactions" value="237"/>
</dbReference>
<dbReference type="STRING" id="226186.BT_1978"/>
<dbReference type="PaxDb" id="226186-BT_1978"/>
<dbReference type="EnsemblBacteria" id="AAO77085">
    <property type="protein sequence ID" value="AAO77085"/>
    <property type="gene ID" value="BT_1978"/>
</dbReference>
<dbReference type="GeneID" id="60927963"/>
<dbReference type="KEGG" id="bth:BT_1978"/>
<dbReference type="PATRIC" id="fig|226186.12.peg.2030"/>
<dbReference type="eggNOG" id="COG0632">
    <property type="taxonomic scope" value="Bacteria"/>
</dbReference>
<dbReference type="HOGENOM" id="CLU_087936_3_0_10"/>
<dbReference type="InParanoid" id="Q8A6A7"/>
<dbReference type="OrthoDB" id="5293449at2"/>
<dbReference type="Proteomes" id="UP000001414">
    <property type="component" value="Chromosome"/>
</dbReference>
<dbReference type="GO" id="GO:0005737">
    <property type="term" value="C:cytoplasm"/>
    <property type="evidence" value="ECO:0007669"/>
    <property type="project" value="UniProtKB-SubCell"/>
</dbReference>
<dbReference type="GO" id="GO:0009379">
    <property type="term" value="C:Holliday junction helicase complex"/>
    <property type="evidence" value="ECO:0007669"/>
    <property type="project" value="InterPro"/>
</dbReference>
<dbReference type="GO" id="GO:0048476">
    <property type="term" value="C:Holliday junction resolvase complex"/>
    <property type="evidence" value="ECO:0007669"/>
    <property type="project" value="UniProtKB-UniRule"/>
</dbReference>
<dbReference type="GO" id="GO:0005524">
    <property type="term" value="F:ATP binding"/>
    <property type="evidence" value="ECO:0007669"/>
    <property type="project" value="InterPro"/>
</dbReference>
<dbReference type="GO" id="GO:0000400">
    <property type="term" value="F:four-way junction DNA binding"/>
    <property type="evidence" value="ECO:0007669"/>
    <property type="project" value="UniProtKB-UniRule"/>
</dbReference>
<dbReference type="GO" id="GO:0009378">
    <property type="term" value="F:four-way junction helicase activity"/>
    <property type="evidence" value="ECO:0000318"/>
    <property type="project" value="GO_Central"/>
</dbReference>
<dbReference type="GO" id="GO:0006310">
    <property type="term" value="P:DNA recombination"/>
    <property type="evidence" value="ECO:0007669"/>
    <property type="project" value="UniProtKB-UniRule"/>
</dbReference>
<dbReference type="GO" id="GO:0006281">
    <property type="term" value="P:DNA repair"/>
    <property type="evidence" value="ECO:0007669"/>
    <property type="project" value="UniProtKB-UniRule"/>
</dbReference>
<dbReference type="GO" id="GO:0009432">
    <property type="term" value="P:SOS response"/>
    <property type="evidence" value="ECO:0000318"/>
    <property type="project" value="GO_Central"/>
</dbReference>
<dbReference type="CDD" id="cd14332">
    <property type="entry name" value="UBA_RuvA_C"/>
    <property type="match status" value="1"/>
</dbReference>
<dbReference type="Gene3D" id="1.10.150.20">
    <property type="entry name" value="5' to 3' exonuclease, C-terminal subdomain"/>
    <property type="match status" value="1"/>
</dbReference>
<dbReference type="Gene3D" id="1.10.8.10">
    <property type="entry name" value="DNA helicase RuvA subunit, C-terminal domain"/>
    <property type="match status" value="1"/>
</dbReference>
<dbReference type="Gene3D" id="2.40.50.140">
    <property type="entry name" value="Nucleic acid-binding proteins"/>
    <property type="match status" value="1"/>
</dbReference>
<dbReference type="HAMAP" id="MF_00031">
    <property type="entry name" value="DNA_HJ_migration_RuvA"/>
    <property type="match status" value="1"/>
</dbReference>
<dbReference type="InterPro" id="IPR013849">
    <property type="entry name" value="DNA_helicase_Holl-junc_RuvA_I"/>
</dbReference>
<dbReference type="InterPro" id="IPR003583">
    <property type="entry name" value="Hlx-hairpin-Hlx_DNA-bd_motif"/>
</dbReference>
<dbReference type="InterPro" id="IPR012340">
    <property type="entry name" value="NA-bd_OB-fold"/>
</dbReference>
<dbReference type="InterPro" id="IPR000085">
    <property type="entry name" value="RuvA"/>
</dbReference>
<dbReference type="InterPro" id="IPR010994">
    <property type="entry name" value="RuvA_2-like"/>
</dbReference>
<dbReference type="InterPro" id="IPR011114">
    <property type="entry name" value="RuvA_C"/>
</dbReference>
<dbReference type="InterPro" id="IPR036267">
    <property type="entry name" value="RuvA_C_sf"/>
</dbReference>
<dbReference type="NCBIfam" id="TIGR00084">
    <property type="entry name" value="ruvA"/>
    <property type="match status" value="1"/>
</dbReference>
<dbReference type="Pfam" id="PF14520">
    <property type="entry name" value="HHH_5"/>
    <property type="match status" value="1"/>
</dbReference>
<dbReference type="Pfam" id="PF07499">
    <property type="entry name" value="RuvA_C"/>
    <property type="match status" value="1"/>
</dbReference>
<dbReference type="Pfam" id="PF01330">
    <property type="entry name" value="RuvA_N"/>
    <property type="match status" value="1"/>
</dbReference>
<dbReference type="SMART" id="SM00278">
    <property type="entry name" value="HhH1"/>
    <property type="match status" value="2"/>
</dbReference>
<dbReference type="SUPFAM" id="SSF46929">
    <property type="entry name" value="DNA helicase RuvA subunit, C-terminal domain"/>
    <property type="match status" value="1"/>
</dbReference>
<dbReference type="SUPFAM" id="SSF50249">
    <property type="entry name" value="Nucleic acid-binding proteins"/>
    <property type="match status" value="1"/>
</dbReference>
<dbReference type="SUPFAM" id="SSF47781">
    <property type="entry name" value="RuvA domain 2-like"/>
    <property type="match status" value="1"/>
</dbReference>
<comment type="function">
    <text evidence="1">The RuvA-RuvB-RuvC complex processes Holliday junction (HJ) DNA during genetic recombination and DNA repair, while the RuvA-RuvB complex plays an important role in the rescue of blocked DNA replication forks via replication fork reversal (RFR). RuvA specifically binds to HJ cruciform DNA, conferring on it an open structure. The RuvB hexamer acts as an ATP-dependent pump, pulling dsDNA into and through the RuvAB complex. HJ branch migration allows RuvC to scan DNA until it finds its consensus sequence, where it cleaves and resolves the cruciform DNA.</text>
</comment>
<comment type="subunit">
    <text evidence="1">Homotetramer. Forms an RuvA(8)-RuvB(12)-Holliday junction (HJ) complex. HJ DNA is sandwiched between 2 RuvA tetramers; dsDNA enters through RuvA and exits via RuvB. An RuvB hexamer assembles on each DNA strand where it exits the tetramer. Each RuvB hexamer is contacted by two RuvA subunits (via domain III) on 2 adjacent RuvB subunits; this complex drives branch migration. In the full resolvosome a probable DNA-RuvA(4)-RuvB(12)-RuvC(2) complex forms which resolves the HJ.</text>
</comment>
<comment type="subcellular location">
    <subcellularLocation>
        <location evidence="1">Cytoplasm</location>
    </subcellularLocation>
</comment>
<comment type="domain">
    <text evidence="1">Has three domains with a flexible linker between the domains II and III and assumes an 'L' shape. Domain III is highly mobile and contacts RuvB.</text>
</comment>
<comment type="similarity">
    <text evidence="1">Belongs to the RuvA family.</text>
</comment>
<proteinExistence type="inferred from homology"/>
<name>RUVA_BACTN</name>
<gene>
    <name evidence="1" type="primary">ruvA</name>
    <name type="ordered locus">BT_1978</name>
</gene>
<feature type="chain" id="PRO_0000094603" description="Holliday junction branch migration complex subunit RuvA">
    <location>
        <begin position="1"/>
        <end position="201"/>
    </location>
</feature>
<feature type="region of interest" description="Domain I" evidence="1">
    <location>
        <begin position="1"/>
        <end position="63"/>
    </location>
</feature>
<feature type="region of interest" description="Domain II" evidence="1">
    <location>
        <begin position="64"/>
        <end position="142"/>
    </location>
</feature>
<feature type="region of interest" description="Flexible linker" evidence="1">
    <location>
        <begin position="143"/>
        <end position="151"/>
    </location>
</feature>
<feature type="region of interest" description="Domain III" evidence="1">
    <location>
        <begin position="152"/>
        <end position="201"/>
    </location>
</feature>